<feature type="chain" id="PRO_0000342401" description="Bis(5'-adenosyl)-triphosphatase">
    <location>
        <begin position="1"/>
        <end position="149"/>
    </location>
</feature>
<feature type="domain" description="HIT" evidence="2">
    <location>
        <begin position="1"/>
        <end position="115"/>
    </location>
</feature>
<feature type="region of interest" description="Disordered" evidence="3">
    <location>
        <begin position="120"/>
        <end position="149"/>
    </location>
</feature>
<feature type="short sequence motif" description="Histidine triad motif" evidence="2">
    <location>
        <begin position="95"/>
        <end position="99"/>
    </location>
</feature>
<feature type="active site" description="Tele-AMP-histidine intermediate" evidence="1">
    <location>
        <position position="97"/>
    </location>
</feature>
<feature type="binding site" evidence="1">
    <location>
        <position position="28"/>
    </location>
    <ligand>
        <name>substrate</name>
    </ligand>
</feature>
<feature type="binding site" evidence="1">
    <location>
        <position position="84"/>
    </location>
    <ligand>
        <name>substrate</name>
    </ligand>
</feature>
<feature type="binding site" evidence="1">
    <location>
        <begin position="90"/>
        <end position="93"/>
    </location>
    <ligand>
        <name>substrate</name>
    </ligand>
</feature>
<feature type="binding site" evidence="1">
    <location>
        <position position="99"/>
    </location>
    <ligand>
        <name>substrate</name>
    </ligand>
</feature>
<organism>
    <name type="scientific">Dictyostelium discoideum</name>
    <name type="common">Social amoeba</name>
    <dbReference type="NCBI Taxonomy" id="44689"/>
    <lineage>
        <taxon>Eukaryota</taxon>
        <taxon>Amoebozoa</taxon>
        <taxon>Evosea</taxon>
        <taxon>Eumycetozoa</taxon>
        <taxon>Dictyostelia</taxon>
        <taxon>Dictyosteliales</taxon>
        <taxon>Dictyosteliaceae</taxon>
        <taxon>Dictyostelium</taxon>
    </lineage>
</organism>
<reference key="1">
    <citation type="journal article" date="2002" name="Nature">
        <title>Sequence and analysis of chromosome 2 of Dictyostelium discoideum.</title>
        <authorList>
            <person name="Gloeckner G."/>
            <person name="Eichinger L."/>
            <person name="Szafranski K."/>
            <person name="Pachebat J.A."/>
            <person name="Bankier A.T."/>
            <person name="Dear P.H."/>
            <person name="Lehmann R."/>
            <person name="Baumgart C."/>
            <person name="Parra G."/>
            <person name="Abril J.F."/>
            <person name="Guigo R."/>
            <person name="Kumpf K."/>
            <person name="Tunggal B."/>
            <person name="Cox E.C."/>
            <person name="Quail M.A."/>
            <person name="Platzer M."/>
            <person name="Rosenthal A."/>
            <person name="Noegel A.A."/>
        </authorList>
    </citation>
    <scope>NUCLEOTIDE SEQUENCE [LARGE SCALE GENOMIC DNA]</scope>
    <source>
        <strain>AX4</strain>
    </source>
</reference>
<reference key="2">
    <citation type="journal article" date="2005" name="Nature">
        <title>The genome of the social amoeba Dictyostelium discoideum.</title>
        <authorList>
            <person name="Eichinger L."/>
            <person name="Pachebat J.A."/>
            <person name="Gloeckner G."/>
            <person name="Rajandream M.A."/>
            <person name="Sucgang R."/>
            <person name="Berriman M."/>
            <person name="Song J."/>
            <person name="Olsen R."/>
            <person name="Szafranski K."/>
            <person name="Xu Q."/>
            <person name="Tunggal B."/>
            <person name="Kummerfeld S."/>
            <person name="Madera M."/>
            <person name="Konfortov B.A."/>
            <person name="Rivero F."/>
            <person name="Bankier A.T."/>
            <person name="Lehmann R."/>
            <person name="Hamlin N."/>
            <person name="Davies R."/>
            <person name="Gaudet P."/>
            <person name="Fey P."/>
            <person name="Pilcher K."/>
            <person name="Chen G."/>
            <person name="Saunders D."/>
            <person name="Sodergren E.J."/>
            <person name="Davis P."/>
            <person name="Kerhornou A."/>
            <person name="Nie X."/>
            <person name="Hall N."/>
            <person name="Anjard C."/>
            <person name="Hemphill L."/>
            <person name="Bason N."/>
            <person name="Farbrother P."/>
            <person name="Desany B."/>
            <person name="Just E."/>
            <person name="Morio T."/>
            <person name="Rost R."/>
            <person name="Churcher C.M."/>
            <person name="Cooper J."/>
            <person name="Haydock S."/>
            <person name="van Driessche N."/>
            <person name="Cronin A."/>
            <person name="Goodhead I."/>
            <person name="Muzny D.M."/>
            <person name="Mourier T."/>
            <person name="Pain A."/>
            <person name="Lu M."/>
            <person name="Harper D."/>
            <person name="Lindsay R."/>
            <person name="Hauser H."/>
            <person name="James K.D."/>
            <person name="Quiles M."/>
            <person name="Madan Babu M."/>
            <person name="Saito T."/>
            <person name="Buchrieser C."/>
            <person name="Wardroper A."/>
            <person name="Felder M."/>
            <person name="Thangavelu M."/>
            <person name="Johnson D."/>
            <person name="Knights A."/>
            <person name="Loulseged H."/>
            <person name="Mungall K.L."/>
            <person name="Oliver K."/>
            <person name="Price C."/>
            <person name="Quail M.A."/>
            <person name="Urushihara H."/>
            <person name="Hernandez J."/>
            <person name="Rabbinowitsch E."/>
            <person name="Steffen D."/>
            <person name="Sanders M."/>
            <person name="Ma J."/>
            <person name="Kohara Y."/>
            <person name="Sharp S."/>
            <person name="Simmonds M.N."/>
            <person name="Spiegler S."/>
            <person name="Tivey A."/>
            <person name="Sugano S."/>
            <person name="White B."/>
            <person name="Walker D."/>
            <person name="Woodward J.R."/>
            <person name="Winckler T."/>
            <person name="Tanaka Y."/>
            <person name="Shaulsky G."/>
            <person name="Schleicher M."/>
            <person name="Weinstock G.M."/>
            <person name="Rosenthal A."/>
            <person name="Cox E.C."/>
            <person name="Chisholm R.L."/>
            <person name="Gibbs R.A."/>
            <person name="Loomis W.F."/>
            <person name="Platzer M."/>
            <person name="Kay R.R."/>
            <person name="Williams J.G."/>
            <person name="Dear P.H."/>
            <person name="Noegel A.A."/>
            <person name="Barrell B.G."/>
            <person name="Kuspa A."/>
        </authorList>
    </citation>
    <scope>NUCLEOTIDE SEQUENCE [LARGE SCALE GENOMIC DNA]</scope>
    <source>
        <strain>AX4</strain>
    </source>
</reference>
<keyword id="KW-0053">Apoptosis</keyword>
<keyword id="KW-0963">Cytoplasm</keyword>
<keyword id="KW-0378">Hydrolase</keyword>
<keyword id="KW-0547">Nucleotide-binding</keyword>
<keyword id="KW-1185">Reference proteome</keyword>
<keyword id="KW-0804">Transcription</keyword>
<keyword id="KW-0805">Transcription regulation</keyword>
<accession>Q86KK2</accession>
<accession>Q555P7</accession>
<gene>
    <name type="primary">fhit</name>
    <name type="ORF">DDB_G0274257</name>
</gene>
<evidence type="ECO:0000250" key="1"/>
<evidence type="ECO:0000255" key="2">
    <source>
        <dbReference type="PROSITE-ProRule" id="PRU00464"/>
    </source>
</evidence>
<evidence type="ECO:0000256" key="3">
    <source>
        <dbReference type="SAM" id="MobiDB-lite"/>
    </source>
</evidence>
<comment type="function">
    <text evidence="1">Cleaves P(1)-P(3)-bis(5'-adenosyl) triphosphate (Ap3A) to yield AMP and ADP. Can also hydrolyze P(1)-P(4)-bis(5'-adenosyl) tetraphosphate (Ap4A), but has extremely low activity with ATP. Modulates transcriptional activation by CTNNB1 and thereby contributes to regulate the expression of genes essential for cell proliferation and survival. Plays a role in the induction of apoptosis via p53/TP53, SRC and AKT1 signaling pathways. Induction of apoptosis depends on the ability of FHIT to bind P(1)-P(3)-bis(5'-adenosyl) triphosphate or related compounds, but does not require its catalytic activity (By similarity).</text>
</comment>
<comment type="catalytic activity">
    <reaction>
        <text>P(1),P(3)-bis(5'-adenosyl) triphosphate + H2O = AMP + ADP + 2 H(+)</text>
        <dbReference type="Rhea" id="RHEA:13893"/>
        <dbReference type="ChEBI" id="CHEBI:15377"/>
        <dbReference type="ChEBI" id="CHEBI:15378"/>
        <dbReference type="ChEBI" id="CHEBI:58529"/>
        <dbReference type="ChEBI" id="CHEBI:456215"/>
        <dbReference type="ChEBI" id="CHEBI:456216"/>
        <dbReference type="EC" id="3.6.1.29"/>
    </reaction>
</comment>
<comment type="cofactor">
    <cofactor evidence="1">
        <name>Mg(2+)</name>
        <dbReference type="ChEBI" id="CHEBI:18420"/>
    </cofactor>
    <cofactor evidence="1">
        <name>Mn(2+)</name>
        <dbReference type="ChEBI" id="CHEBI:29035"/>
    </cofactor>
    <text evidence="1">Divalent metal cations. Mg(2+) or Mn(2+).</text>
</comment>
<comment type="subunit">
    <text evidence="1">Homodimer.</text>
</comment>
<comment type="subcellular location">
    <subcellularLocation>
        <location evidence="1">Cytoplasm</location>
    </subcellularLocation>
</comment>
<dbReference type="EC" id="3.6.1.29"/>
<dbReference type="EMBL" id="AAFI02000012">
    <property type="protein sequence ID" value="EAL70021.1"/>
    <property type="molecule type" value="Genomic_DNA"/>
</dbReference>
<dbReference type="RefSeq" id="XP_644016.1">
    <property type="nucleotide sequence ID" value="XM_638924.1"/>
</dbReference>
<dbReference type="SMR" id="Q86KK2"/>
<dbReference type="FunCoup" id="Q86KK2">
    <property type="interactions" value="17"/>
</dbReference>
<dbReference type="STRING" id="44689.Q86KK2"/>
<dbReference type="PaxDb" id="44689-DDB0167807"/>
<dbReference type="EnsemblProtists" id="EAL70021">
    <property type="protein sequence ID" value="EAL70021"/>
    <property type="gene ID" value="DDB_G0274257"/>
</dbReference>
<dbReference type="GeneID" id="8619446"/>
<dbReference type="KEGG" id="ddi:DDB_G0274257"/>
<dbReference type="dictyBase" id="DDB_G0274257">
    <property type="gene designation" value="fhit"/>
</dbReference>
<dbReference type="VEuPathDB" id="AmoebaDB:DDB_G0274257"/>
<dbReference type="eggNOG" id="KOG3379">
    <property type="taxonomic scope" value="Eukaryota"/>
</dbReference>
<dbReference type="HOGENOM" id="CLU_056776_7_3_1"/>
<dbReference type="InParanoid" id="Q86KK2"/>
<dbReference type="OMA" id="DAIYGMM"/>
<dbReference type="PhylomeDB" id="Q86KK2"/>
<dbReference type="PRO" id="PR:Q86KK2"/>
<dbReference type="Proteomes" id="UP000002195">
    <property type="component" value="Chromosome 2"/>
</dbReference>
<dbReference type="GO" id="GO:0005737">
    <property type="term" value="C:cytoplasm"/>
    <property type="evidence" value="ECO:0007669"/>
    <property type="project" value="UniProtKB-SubCell"/>
</dbReference>
<dbReference type="GO" id="GO:0047710">
    <property type="term" value="F:bis(5'-adenosyl)-triphosphatase activity"/>
    <property type="evidence" value="ECO:0007669"/>
    <property type="project" value="UniProtKB-EC"/>
</dbReference>
<dbReference type="GO" id="GO:0004081">
    <property type="term" value="F:bis(5'-nucleosyl)-tetraphosphatase (asymmetrical) activity"/>
    <property type="evidence" value="ECO:0000318"/>
    <property type="project" value="GO_Central"/>
</dbReference>
<dbReference type="GO" id="GO:0000166">
    <property type="term" value="F:nucleotide binding"/>
    <property type="evidence" value="ECO:0007669"/>
    <property type="project" value="UniProtKB-KW"/>
</dbReference>
<dbReference type="CDD" id="cd01275">
    <property type="entry name" value="FHIT"/>
    <property type="match status" value="1"/>
</dbReference>
<dbReference type="FunFam" id="3.30.428.10:FF:000011">
    <property type="entry name" value="Fragile histidine triad"/>
    <property type="match status" value="1"/>
</dbReference>
<dbReference type="Gene3D" id="3.30.428.10">
    <property type="entry name" value="HIT-like"/>
    <property type="match status" value="1"/>
</dbReference>
<dbReference type="InterPro" id="IPR051884">
    <property type="entry name" value="Bis(5'-adenosyl)-TPase_reg"/>
</dbReference>
<dbReference type="InterPro" id="IPR039383">
    <property type="entry name" value="FHIT"/>
</dbReference>
<dbReference type="InterPro" id="IPR019808">
    <property type="entry name" value="Histidine_triad_CS"/>
</dbReference>
<dbReference type="InterPro" id="IPR001310">
    <property type="entry name" value="Histidine_triad_HIT"/>
</dbReference>
<dbReference type="InterPro" id="IPR011146">
    <property type="entry name" value="HIT-like"/>
</dbReference>
<dbReference type="InterPro" id="IPR036265">
    <property type="entry name" value="HIT-like_sf"/>
</dbReference>
<dbReference type="PANTHER" id="PTHR46243">
    <property type="entry name" value="BIS(5'-ADENOSYL)-TRIPHOSPHATASE"/>
    <property type="match status" value="1"/>
</dbReference>
<dbReference type="PANTHER" id="PTHR46243:SF1">
    <property type="entry name" value="BIS(5'-ADENOSYL)-TRIPHOSPHATASE"/>
    <property type="match status" value="1"/>
</dbReference>
<dbReference type="Pfam" id="PF01230">
    <property type="entry name" value="HIT"/>
    <property type="match status" value="1"/>
</dbReference>
<dbReference type="PRINTS" id="PR00332">
    <property type="entry name" value="HISTRIAD"/>
</dbReference>
<dbReference type="SUPFAM" id="SSF54197">
    <property type="entry name" value="HIT-like"/>
    <property type="match status" value="1"/>
</dbReference>
<dbReference type="PROSITE" id="PS00892">
    <property type="entry name" value="HIT_1"/>
    <property type="match status" value="1"/>
</dbReference>
<dbReference type="PROSITE" id="PS51084">
    <property type="entry name" value="HIT_2"/>
    <property type="match status" value="1"/>
</dbReference>
<name>FHIT_DICDI</name>
<protein>
    <recommendedName>
        <fullName>Bis(5'-adenosyl)-triphosphatase</fullName>
        <ecNumber>3.6.1.29</ecNumber>
    </recommendedName>
    <alternativeName>
        <fullName>AP3A hydrolase</fullName>
        <shortName>AP3Aase</shortName>
    </alternativeName>
    <alternativeName>
        <fullName>Diadenosine 5',5'''-P1,P3-triphosphate hydrolase</fullName>
    </alternativeName>
    <alternativeName>
        <fullName>Dinucleosidetriphosphatase</fullName>
    </alternativeName>
    <alternativeName>
        <fullName>Fragile histidine triad protein homolog</fullName>
    </alternativeName>
</protein>
<proteinExistence type="inferred from homology"/>
<sequence length="149" mass="17499">MTTTYFGPWLIRQSEIFFTTELSFALVNLKPVLPGHVLVCPKRIVPRVKDLTKEEFTDLWLSAQRISSVVEEHFNGDGITFAIQDGKNAGQTVEHVHIHIIPRKKFDFENNDQIYNEIEKEREPRSYEEMEKESSELRPLFEENKNKTF</sequence>